<reference key="1">
    <citation type="journal article" date="1994" name="Nature">
        <title>2.2 Mb of contiguous nucleotide sequence from chromosome III of C. elegans.</title>
        <authorList>
            <person name="Wilson R."/>
            <person name="Ainscough R."/>
            <person name="Anderson K."/>
            <person name="Baynes C."/>
            <person name="Berks M."/>
            <person name="Bonfield J."/>
            <person name="Burton J."/>
            <person name="Connell M."/>
            <person name="Copsey T."/>
            <person name="Cooper J."/>
            <person name="Coulson A."/>
            <person name="Craxton M."/>
            <person name="Dear S."/>
            <person name="Du Z."/>
            <person name="Durbin R."/>
            <person name="Favello A."/>
            <person name="Fraser A."/>
            <person name="Fulton L."/>
            <person name="Gardner A."/>
            <person name="Green P."/>
            <person name="Hawkins T."/>
            <person name="Hillier L."/>
            <person name="Jier M."/>
            <person name="Johnston L."/>
            <person name="Jones M."/>
            <person name="Kershaw J."/>
            <person name="Kirsten J."/>
            <person name="Laisster N."/>
            <person name="Latreille P."/>
            <person name="Lightning J."/>
            <person name="Lloyd C."/>
            <person name="Mortimore B."/>
            <person name="O'Callaghan M."/>
            <person name="Parsons J."/>
            <person name="Percy C."/>
            <person name="Rifken L."/>
            <person name="Roopra A."/>
            <person name="Saunders D."/>
            <person name="Shownkeen R."/>
            <person name="Sims M."/>
            <person name="Smaldon N."/>
            <person name="Smith A."/>
            <person name="Smith M."/>
            <person name="Sonnhammer E."/>
            <person name="Staden R."/>
            <person name="Sulston J."/>
            <person name="Thierry-Mieg J."/>
            <person name="Thomas K."/>
            <person name="Vaudin M."/>
            <person name="Vaughan K."/>
            <person name="Waterston R."/>
            <person name="Watson A."/>
            <person name="Weinstock L."/>
            <person name="Wilkinson-Sproat J."/>
            <person name="Wohldman P."/>
        </authorList>
    </citation>
    <scope>NUCLEOTIDE SEQUENCE [LARGE SCALE GENOMIC DNA]</scope>
    <source>
        <strain>Bristol N2</strain>
    </source>
</reference>
<reference key="2">
    <citation type="journal article" date="1998" name="Science">
        <title>Genome sequence of the nematode C. elegans: a platform for investigating biology.</title>
        <authorList>
            <consortium name="The C. elegans sequencing consortium"/>
        </authorList>
    </citation>
    <scope>NUCLEOTIDE SEQUENCE [LARGE SCALE GENOMIC DNA]</scope>
    <source>
        <strain>Bristol N2</strain>
    </source>
</reference>
<gene>
    <name type="primary">mrpl-18</name>
    <name type="ORF">D2007.4</name>
</gene>
<accession>P34378</accession>
<protein>
    <recommendedName>
        <fullName evidence="2">Large ribosomal subunit protein uL18m</fullName>
    </recommendedName>
    <alternativeName>
        <fullName>39S ribosomal protein L18, mitochondrial</fullName>
    </alternativeName>
</protein>
<organism>
    <name type="scientific">Caenorhabditis elegans</name>
    <dbReference type="NCBI Taxonomy" id="6239"/>
    <lineage>
        <taxon>Eukaryota</taxon>
        <taxon>Metazoa</taxon>
        <taxon>Ecdysozoa</taxon>
        <taxon>Nematoda</taxon>
        <taxon>Chromadorea</taxon>
        <taxon>Rhabditida</taxon>
        <taxon>Rhabditina</taxon>
        <taxon>Rhabditomorpha</taxon>
        <taxon>Rhabditoidea</taxon>
        <taxon>Rhabditidae</taxon>
        <taxon>Peloderinae</taxon>
        <taxon>Caenorhabditis</taxon>
    </lineage>
</organism>
<keyword id="KW-0496">Mitochondrion</keyword>
<keyword id="KW-1185">Reference proteome</keyword>
<keyword id="KW-0687">Ribonucleoprotein</keyword>
<keyword id="KW-0689">Ribosomal protein</keyword>
<proteinExistence type="inferred from homology"/>
<name>RM18_CAEEL</name>
<comment type="subunit">
    <text evidence="1">Component of the mitochondrial ribosome large subunit (39S) which comprises a 16S rRNA and about 50 distinct proteins.</text>
</comment>
<comment type="subcellular location">
    <subcellularLocation>
        <location evidence="1">Mitochondrion</location>
    </subcellularLocation>
</comment>
<comment type="similarity">
    <text evidence="2">Belongs to the universal ribosomal protein uL18 family.</text>
</comment>
<feature type="chain" id="PRO_0000065266" description="Large ribosomal subunit protein uL18m">
    <location>
        <begin position="1"/>
        <end position="170"/>
    </location>
</feature>
<evidence type="ECO:0000250" key="1">
    <source>
        <dbReference type="UniProtKB" id="Q9H0U6"/>
    </source>
</evidence>
<evidence type="ECO:0000305" key="2"/>
<dbReference type="EMBL" id="FO080532">
    <property type="protein sequence ID" value="CCD64449.1"/>
    <property type="molecule type" value="Genomic_DNA"/>
</dbReference>
<dbReference type="PIR" id="S44789">
    <property type="entry name" value="S44789"/>
</dbReference>
<dbReference type="RefSeq" id="NP_498778.1">
    <property type="nucleotide sequence ID" value="NM_066377.4"/>
</dbReference>
<dbReference type="SMR" id="P34378"/>
<dbReference type="BioGRID" id="48746">
    <property type="interactions" value="2"/>
</dbReference>
<dbReference type="DIP" id="DIP-27290N"/>
<dbReference type="FunCoup" id="P34378">
    <property type="interactions" value="2425"/>
</dbReference>
<dbReference type="IntAct" id="P34378">
    <property type="interactions" value="1"/>
</dbReference>
<dbReference type="STRING" id="6239.D2007.4.1"/>
<dbReference type="PaxDb" id="6239-D2007.4"/>
<dbReference type="PeptideAtlas" id="P34378"/>
<dbReference type="EnsemblMetazoa" id="D2007.4.1">
    <property type="protein sequence ID" value="D2007.4.1"/>
    <property type="gene ID" value="WBGene00017044"/>
</dbReference>
<dbReference type="GeneID" id="183940"/>
<dbReference type="KEGG" id="cel:CELE_D2007.4"/>
<dbReference type="UCSC" id="D2007.4">
    <property type="organism name" value="c. elegans"/>
</dbReference>
<dbReference type="AGR" id="WB:WBGene00017044"/>
<dbReference type="CTD" id="183940"/>
<dbReference type="WormBase" id="D2007.4">
    <property type="protein sequence ID" value="CE00129"/>
    <property type="gene ID" value="WBGene00017044"/>
    <property type="gene designation" value="mrpl-18"/>
</dbReference>
<dbReference type="eggNOG" id="KOG3333">
    <property type="taxonomic scope" value="Eukaryota"/>
</dbReference>
<dbReference type="GeneTree" id="ENSGT00390000006394"/>
<dbReference type="HOGENOM" id="CLU_108540_1_0_1"/>
<dbReference type="InParanoid" id="P34378"/>
<dbReference type="OMA" id="TSEWAIK"/>
<dbReference type="OrthoDB" id="1932324at2759"/>
<dbReference type="PhylomeDB" id="P34378"/>
<dbReference type="Reactome" id="R-CEL-5389840">
    <property type="pathway name" value="Mitochondrial translation elongation"/>
</dbReference>
<dbReference type="Reactome" id="R-CEL-5419276">
    <property type="pathway name" value="Mitochondrial translation termination"/>
</dbReference>
<dbReference type="PRO" id="PR:P34378"/>
<dbReference type="Proteomes" id="UP000001940">
    <property type="component" value="Chromosome III"/>
</dbReference>
<dbReference type="Bgee" id="WBGene00017044">
    <property type="expression patterns" value="Expressed in germ line (C elegans) and 4 other cell types or tissues"/>
</dbReference>
<dbReference type="GO" id="GO:0005762">
    <property type="term" value="C:mitochondrial large ribosomal subunit"/>
    <property type="evidence" value="ECO:0000250"/>
    <property type="project" value="UniProtKB"/>
</dbReference>
<dbReference type="GO" id="GO:0005739">
    <property type="term" value="C:mitochondrion"/>
    <property type="evidence" value="ECO:0000318"/>
    <property type="project" value="GO_Central"/>
</dbReference>
<dbReference type="GO" id="GO:0008097">
    <property type="term" value="F:5S rRNA binding"/>
    <property type="evidence" value="ECO:0000318"/>
    <property type="project" value="GO_Central"/>
</dbReference>
<dbReference type="GO" id="GO:0003735">
    <property type="term" value="F:structural constituent of ribosome"/>
    <property type="evidence" value="ECO:0007669"/>
    <property type="project" value="InterPro"/>
</dbReference>
<dbReference type="GO" id="GO:0006412">
    <property type="term" value="P:translation"/>
    <property type="evidence" value="ECO:0007669"/>
    <property type="project" value="InterPro"/>
</dbReference>
<dbReference type="CDD" id="cd00432">
    <property type="entry name" value="Ribosomal_L18_L5e"/>
    <property type="match status" value="1"/>
</dbReference>
<dbReference type="FunFam" id="3.30.420.80:FF:000005">
    <property type="entry name" value="39S ribosomal protein L18, mitochondrial"/>
    <property type="match status" value="1"/>
</dbReference>
<dbReference type="Gene3D" id="3.30.420.80">
    <property type="entry name" value="Ribosomal protein S11"/>
    <property type="match status" value="1"/>
</dbReference>
<dbReference type="InterPro" id="IPR005484">
    <property type="entry name" value="Ribosomal_uL18_bac/euk"/>
</dbReference>
<dbReference type="InterPro" id="IPR036967">
    <property type="entry name" value="Ribosomal_uS11_sf"/>
</dbReference>
<dbReference type="PANTHER" id="PTHR12899">
    <property type="entry name" value="39S RIBOSOMAL PROTEIN L18, MITOCHONDRIAL"/>
    <property type="match status" value="1"/>
</dbReference>
<dbReference type="PANTHER" id="PTHR12899:SF3">
    <property type="entry name" value="LARGE RIBOSOMAL SUBUNIT PROTEIN UL18M"/>
    <property type="match status" value="1"/>
</dbReference>
<dbReference type="SUPFAM" id="SSF53137">
    <property type="entry name" value="Translational machinery components"/>
    <property type="match status" value="1"/>
</dbReference>
<sequence length="170" mass="19396">MAARFARGFVNRNPRNNELMGRQAPNTGYQFEKDRAARSYIYKVELVEGKSHREGRLVHYQDGVVISASTKEPSIASQLYSKTDTSAALNIGRVLALRCLQSGIHFAMPGATKEAIEKSQHQTHFFKALEEEGLTLKEPAHVEHSYETDKTFTWKRYPQKPTRQDKLDEL</sequence>